<keyword id="KW-0560">Oxidoreductase</keyword>
<keyword id="KW-0663">Pyridoxal phosphate</keyword>
<keyword id="KW-1185">Reference proteome</keyword>
<dbReference type="EC" id="1.4.4.2" evidence="1"/>
<dbReference type="EMBL" id="CU234118">
    <property type="protein sequence ID" value="CAL78685.1"/>
    <property type="molecule type" value="Genomic_DNA"/>
</dbReference>
<dbReference type="RefSeq" id="WP_012028626.1">
    <property type="nucleotide sequence ID" value="NC_009445.1"/>
</dbReference>
<dbReference type="SMR" id="A4YXQ9"/>
<dbReference type="STRING" id="114615.BRADO4984"/>
<dbReference type="KEGG" id="bra:BRADO4984"/>
<dbReference type="eggNOG" id="COG0403">
    <property type="taxonomic scope" value="Bacteria"/>
</dbReference>
<dbReference type="eggNOG" id="COG1003">
    <property type="taxonomic scope" value="Bacteria"/>
</dbReference>
<dbReference type="HOGENOM" id="CLU_004620_4_1_5"/>
<dbReference type="OrthoDB" id="9801272at2"/>
<dbReference type="Proteomes" id="UP000001994">
    <property type="component" value="Chromosome"/>
</dbReference>
<dbReference type="GO" id="GO:0005829">
    <property type="term" value="C:cytosol"/>
    <property type="evidence" value="ECO:0007669"/>
    <property type="project" value="TreeGrafter"/>
</dbReference>
<dbReference type="GO" id="GO:0005960">
    <property type="term" value="C:glycine cleavage complex"/>
    <property type="evidence" value="ECO:0007669"/>
    <property type="project" value="TreeGrafter"/>
</dbReference>
<dbReference type="GO" id="GO:0016594">
    <property type="term" value="F:glycine binding"/>
    <property type="evidence" value="ECO:0007669"/>
    <property type="project" value="TreeGrafter"/>
</dbReference>
<dbReference type="GO" id="GO:0004375">
    <property type="term" value="F:glycine dehydrogenase (decarboxylating) activity"/>
    <property type="evidence" value="ECO:0007669"/>
    <property type="project" value="UniProtKB-EC"/>
</dbReference>
<dbReference type="GO" id="GO:0030170">
    <property type="term" value="F:pyridoxal phosphate binding"/>
    <property type="evidence" value="ECO:0007669"/>
    <property type="project" value="TreeGrafter"/>
</dbReference>
<dbReference type="GO" id="GO:0019464">
    <property type="term" value="P:glycine decarboxylation via glycine cleavage system"/>
    <property type="evidence" value="ECO:0007669"/>
    <property type="project" value="UniProtKB-UniRule"/>
</dbReference>
<dbReference type="CDD" id="cd00613">
    <property type="entry name" value="GDC-P"/>
    <property type="match status" value="2"/>
</dbReference>
<dbReference type="FunFam" id="3.40.640.10:FF:000005">
    <property type="entry name" value="Glycine dehydrogenase (decarboxylating), mitochondrial"/>
    <property type="match status" value="1"/>
</dbReference>
<dbReference type="FunFam" id="3.90.1150.10:FF:000007">
    <property type="entry name" value="Glycine dehydrogenase (decarboxylating), mitochondrial"/>
    <property type="match status" value="1"/>
</dbReference>
<dbReference type="FunFam" id="3.40.640.10:FF:000007">
    <property type="entry name" value="glycine dehydrogenase (Decarboxylating), mitochondrial"/>
    <property type="match status" value="1"/>
</dbReference>
<dbReference type="Gene3D" id="3.90.1150.10">
    <property type="entry name" value="Aspartate Aminotransferase, domain 1"/>
    <property type="match status" value="2"/>
</dbReference>
<dbReference type="Gene3D" id="3.40.640.10">
    <property type="entry name" value="Type I PLP-dependent aspartate aminotransferase-like (Major domain)"/>
    <property type="match status" value="2"/>
</dbReference>
<dbReference type="HAMAP" id="MF_00711">
    <property type="entry name" value="GcvP"/>
    <property type="match status" value="1"/>
</dbReference>
<dbReference type="InterPro" id="IPR003437">
    <property type="entry name" value="GcvP"/>
</dbReference>
<dbReference type="InterPro" id="IPR049316">
    <property type="entry name" value="GDC-P_C"/>
</dbReference>
<dbReference type="InterPro" id="IPR049315">
    <property type="entry name" value="GDC-P_N"/>
</dbReference>
<dbReference type="InterPro" id="IPR020581">
    <property type="entry name" value="GDC_P"/>
</dbReference>
<dbReference type="InterPro" id="IPR015424">
    <property type="entry name" value="PyrdxlP-dep_Trfase"/>
</dbReference>
<dbReference type="InterPro" id="IPR015421">
    <property type="entry name" value="PyrdxlP-dep_Trfase_major"/>
</dbReference>
<dbReference type="InterPro" id="IPR015422">
    <property type="entry name" value="PyrdxlP-dep_Trfase_small"/>
</dbReference>
<dbReference type="NCBIfam" id="TIGR00461">
    <property type="entry name" value="gcvP"/>
    <property type="match status" value="1"/>
</dbReference>
<dbReference type="NCBIfam" id="NF001696">
    <property type="entry name" value="PRK00451.1"/>
    <property type="match status" value="1"/>
</dbReference>
<dbReference type="NCBIfam" id="NF003346">
    <property type="entry name" value="PRK04366.1"/>
    <property type="match status" value="1"/>
</dbReference>
<dbReference type="PANTHER" id="PTHR11773:SF1">
    <property type="entry name" value="GLYCINE DEHYDROGENASE (DECARBOXYLATING), MITOCHONDRIAL"/>
    <property type="match status" value="1"/>
</dbReference>
<dbReference type="PANTHER" id="PTHR11773">
    <property type="entry name" value="GLYCINE DEHYDROGENASE, DECARBOXYLATING"/>
    <property type="match status" value="1"/>
</dbReference>
<dbReference type="Pfam" id="PF21478">
    <property type="entry name" value="GcvP2_C"/>
    <property type="match status" value="1"/>
</dbReference>
<dbReference type="Pfam" id="PF02347">
    <property type="entry name" value="GDC-P"/>
    <property type="match status" value="2"/>
</dbReference>
<dbReference type="SUPFAM" id="SSF53383">
    <property type="entry name" value="PLP-dependent transferases"/>
    <property type="match status" value="2"/>
</dbReference>
<evidence type="ECO:0000255" key="1">
    <source>
        <dbReference type="HAMAP-Rule" id="MF_00711"/>
    </source>
</evidence>
<organism>
    <name type="scientific">Bradyrhizobium sp. (strain ORS 278)</name>
    <dbReference type="NCBI Taxonomy" id="114615"/>
    <lineage>
        <taxon>Bacteria</taxon>
        <taxon>Pseudomonadati</taxon>
        <taxon>Pseudomonadota</taxon>
        <taxon>Alphaproteobacteria</taxon>
        <taxon>Hyphomicrobiales</taxon>
        <taxon>Nitrobacteraceae</taxon>
        <taxon>Bradyrhizobium</taxon>
    </lineage>
</organism>
<gene>
    <name evidence="1" type="primary">gcvP</name>
    <name type="ordered locus">BRADO4984</name>
</gene>
<protein>
    <recommendedName>
        <fullName evidence="1">Glycine dehydrogenase (decarboxylating)</fullName>
        <ecNumber evidence="1">1.4.4.2</ecNumber>
    </recommendedName>
    <alternativeName>
        <fullName evidence="1">Glycine cleavage system P-protein</fullName>
    </alternativeName>
    <alternativeName>
        <fullName evidence="1">Glycine decarboxylase</fullName>
    </alternativeName>
    <alternativeName>
        <fullName evidence="1">Glycine dehydrogenase (aminomethyl-transferring)</fullName>
    </alternativeName>
</protein>
<feature type="chain" id="PRO_1000062073" description="Glycine dehydrogenase (decarboxylating)">
    <location>
        <begin position="1"/>
        <end position="957"/>
    </location>
</feature>
<feature type="modified residue" description="N6-(pyridoxal phosphate)lysine" evidence="1">
    <location>
        <position position="702"/>
    </location>
</feature>
<reference key="1">
    <citation type="journal article" date="2007" name="Science">
        <title>Legumes symbioses: absence of nod genes in photosynthetic bradyrhizobia.</title>
        <authorList>
            <person name="Giraud E."/>
            <person name="Moulin L."/>
            <person name="Vallenet D."/>
            <person name="Barbe V."/>
            <person name="Cytryn E."/>
            <person name="Avarre J.-C."/>
            <person name="Jaubert M."/>
            <person name="Simon D."/>
            <person name="Cartieaux F."/>
            <person name="Prin Y."/>
            <person name="Bena G."/>
            <person name="Hannibal L."/>
            <person name="Fardoux J."/>
            <person name="Kojadinovic M."/>
            <person name="Vuillet L."/>
            <person name="Lajus A."/>
            <person name="Cruveiller S."/>
            <person name="Rouy Z."/>
            <person name="Mangenot S."/>
            <person name="Segurens B."/>
            <person name="Dossat C."/>
            <person name="Franck W.L."/>
            <person name="Chang W.-S."/>
            <person name="Saunders E."/>
            <person name="Bruce D."/>
            <person name="Richardson P."/>
            <person name="Normand P."/>
            <person name="Dreyfus B."/>
            <person name="Pignol D."/>
            <person name="Stacey G."/>
            <person name="Emerich D."/>
            <person name="Vermeglio A."/>
            <person name="Medigue C."/>
            <person name="Sadowsky M."/>
        </authorList>
    </citation>
    <scope>NUCLEOTIDE SEQUENCE [LARGE SCALE GENOMIC DNA]</scope>
    <source>
        <strain>ORS 278</strain>
    </source>
</reference>
<comment type="function">
    <text evidence="1">The glycine cleavage system catalyzes the degradation of glycine. The P protein binds the alpha-amino group of glycine through its pyridoxal phosphate cofactor; CO(2) is released and the remaining methylamine moiety is then transferred to the lipoamide cofactor of the H protein.</text>
</comment>
<comment type="catalytic activity">
    <reaction evidence="1">
        <text>N(6)-[(R)-lipoyl]-L-lysyl-[glycine-cleavage complex H protein] + glycine + H(+) = N(6)-[(R)-S(8)-aminomethyldihydrolipoyl]-L-lysyl-[glycine-cleavage complex H protein] + CO2</text>
        <dbReference type="Rhea" id="RHEA:24304"/>
        <dbReference type="Rhea" id="RHEA-COMP:10494"/>
        <dbReference type="Rhea" id="RHEA-COMP:10495"/>
        <dbReference type="ChEBI" id="CHEBI:15378"/>
        <dbReference type="ChEBI" id="CHEBI:16526"/>
        <dbReference type="ChEBI" id="CHEBI:57305"/>
        <dbReference type="ChEBI" id="CHEBI:83099"/>
        <dbReference type="ChEBI" id="CHEBI:83143"/>
        <dbReference type="EC" id="1.4.4.2"/>
    </reaction>
</comment>
<comment type="cofactor">
    <cofactor evidence="1">
        <name>pyridoxal 5'-phosphate</name>
        <dbReference type="ChEBI" id="CHEBI:597326"/>
    </cofactor>
</comment>
<comment type="subunit">
    <text evidence="1">The glycine cleavage system is composed of four proteins: P, T, L and H.</text>
</comment>
<comment type="similarity">
    <text evidence="1">Belongs to the GcvP family.</text>
</comment>
<proteinExistence type="inferred from homology"/>
<accession>A4YXQ9</accession>
<sequence length="957" mass="102667">MTTPLKPLDDAATSFARRHIGPSPRDVAAMLETVNAKSVAELMAQTLPGTIRQAAPLDIGPALSETEALSHMRALAAQNQVFTSLIGQGYAGTIMPAVIQRNILENPAWYTAYTPYQPEISQGRLEALFNFQTMICDLTGLDVANASLLDEGTAAAEAMALAERSARAKTKAFFVDHNVHPQTLTVLRTRAEPLGWKLIVGDPAGDLDGAEVFGGLLQYPDTTGALRDPRAAIAKLHDKGALAILAADLLALTLIASPGELGADIAIGSAQRFGVPMGYGGPHAAYMAVRDALKRSLPGRIVGLSVDSRGAPAYRLALQTREQHIRREKATSNICTAQVLLAVIAAMYAVYHGPAGLKAIARTVHRRTAVLAAGLRKLGFAPANDAFFDTVTVEAGANASSIIARAEAERINLGHNGSRLRIALDETTTADVVEAAWRAFGGELSYADIEAEARDAVPAELKRQRPYLTHPVFHAHRSETEMLRYLRKLADRDLALDRAMIPLGSCTMKLNATTEMIPLTWPEFSSLHPFVPRAQAAGYHAMFADLQDWLCRISGYDAVSLQPNSGAQGEYAGLLAIRGYHAARGEAHRTICLIPSSAHGTNPASAHMVGMEVVVVGCDAGGNVDLADLKAKAEAHSQKLAAIMITYPSTHGVFEEHIRDICDIVHAHGGQVYLDGANLNAQVGLARPGDYGADVSHFNLHKTFCIPHGGGGPGMGPIGVKAHLAPFLPGHPATDGKTAHPVGPVSAAPYGSASILTISYIYMLLMGGEGLTRATEIAILNANYVAARLDAHFPVLYRNERGRIAHECIIDPRLLKQTSGVTVDDIAKRLIDYGFHAPTMSFPVAGTLMIEPTESESKAELDRFCDAMIAIRKEIAEVEQGRFTIEASPLRHAPHTVHDIADDEWSRAYRRSEGCFPAGSSRTDKYWCPVGRVDNVYGDRNLVCSCPPVEDYAQAAE</sequence>
<name>GCSP_BRASO</name>